<sequence>MAIVGTIIKIIKAIIDIFAK</sequence>
<feature type="peptide" id="PRO_0000345072" description="Phenol-soluble modulin alpha 4 peptide">
    <location>
        <begin position="1"/>
        <end position="20"/>
    </location>
</feature>
<gene>
    <name type="primary">psmA4</name>
    <name type="ordered locus">SaurJH1_0486.1</name>
</gene>
<name>PSMA4_STAA2</name>
<keyword id="KW-0204">Cytolysis</keyword>
<keyword id="KW-0843">Virulence</keyword>
<dbReference type="EMBL" id="CP000736">
    <property type="status" value="NOT_ANNOTATED_CDS"/>
    <property type="molecule type" value="Genomic_DNA"/>
</dbReference>
<dbReference type="SMR" id="P0C816"/>
<dbReference type="GO" id="GO:0031640">
    <property type="term" value="P:killing of cells of another organism"/>
    <property type="evidence" value="ECO:0007669"/>
    <property type="project" value="UniProtKB-KW"/>
</dbReference>
<dbReference type="InterPro" id="IPR031429">
    <property type="entry name" value="PSM_alpha"/>
</dbReference>
<dbReference type="Pfam" id="PF17063">
    <property type="entry name" value="PSMalpha"/>
    <property type="match status" value="1"/>
</dbReference>
<evidence type="ECO:0000250" key="1">
    <source>
        <dbReference type="UniProtKB" id="A9JX08"/>
    </source>
</evidence>
<evidence type="ECO:0000305" key="2"/>
<accession>P0C816</accession>
<organism>
    <name type="scientific">Staphylococcus aureus (strain JH1)</name>
    <dbReference type="NCBI Taxonomy" id="359787"/>
    <lineage>
        <taxon>Bacteria</taxon>
        <taxon>Bacillati</taxon>
        <taxon>Bacillota</taxon>
        <taxon>Bacilli</taxon>
        <taxon>Bacillales</taxon>
        <taxon>Staphylococcaceae</taxon>
        <taxon>Staphylococcus</taxon>
    </lineage>
</organism>
<reference key="1">
    <citation type="submission" date="2007-06" db="EMBL/GenBank/DDBJ databases">
        <title>Complete sequence of chromosome of Staphylococcus aureus subsp. aureus JH1.</title>
        <authorList>
            <consortium name="US DOE Joint Genome Institute"/>
            <person name="Copeland A."/>
            <person name="Lucas S."/>
            <person name="Lapidus A."/>
            <person name="Barry K."/>
            <person name="Detter J.C."/>
            <person name="Glavina del Rio T."/>
            <person name="Hammon N."/>
            <person name="Israni S."/>
            <person name="Dalin E."/>
            <person name="Tice H."/>
            <person name="Pitluck S."/>
            <person name="Chain P."/>
            <person name="Malfatti S."/>
            <person name="Shin M."/>
            <person name="Vergez L."/>
            <person name="Schmutz J."/>
            <person name="Larimer F."/>
            <person name="Land M."/>
            <person name="Hauser L."/>
            <person name="Kyrpides N."/>
            <person name="Ivanova N."/>
            <person name="Tomasz A."/>
            <person name="Richardson P."/>
        </authorList>
    </citation>
    <scope>NUCLEOTIDE SEQUENCE [LARGE SCALE GENOMIC DNA]</scope>
    <source>
        <strain>JH1</strain>
    </source>
</reference>
<comment type="function">
    <text evidence="1">Peptide which can recruit, activate and subsequently lyse human neutrophils, thus eliminating the main cellular defense against infection.</text>
</comment>
<comment type="similarity">
    <text evidence="2">Belongs to the phenol-soluble modulin alpha peptides family.</text>
</comment>
<protein>
    <recommendedName>
        <fullName>Phenol-soluble modulin alpha 4 peptide</fullName>
    </recommendedName>
</protein>
<proteinExistence type="inferred from homology"/>